<dbReference type="EMBL" id="AB024035">
    <property type="protein sequence ID" value="BAA97026.1"/>
    <property type="molecule type" value="Genomic_DNA"/>
</dbReference>
<dbReference type="EMBL" id="CP002688">
    <property type="protein sequence ID" value="AED96827.1"/>
    <property type="molecule type" value="Genomic_DNA"/>
</dbReference>
<dbReference type="RefSeq" id="NP_200506.1">
    <property type="nucleotide sequence ID" value="NM_125078.2"/>
</dbReference>
<dbReference type="SMR" id="Q9LTS4"/>
<dbReference type="FunCoup" id="Q9LTS4">
    <property type="interactions" value="114"/>
</dbReference>
<dbReference type="STRING" id="3702.Q9LTS4"/>
<dbReference type="iPTMnet" id="Q9LTS4"/>
<dbReference type="PaxDb" id="3702-AT5G56960.1"/>
<dbReference type="EnsemblPlants" id="AT5G56960.1">
    <property type="protein sequence ID" value="AT5G56960.1"/>
    <property type="gene ID" value="AT5G56960"/>
</dbReference>
<dbReference type="GeneID" id="835798"/>
<dbReference type="Gramene" id="AT5G56960.1">
    <property type="protein sequence ID" value="AT5G56960.1"/>
    <property type="gene ID" value="AT5G56960"/>
</dbReference>
<dbReference type="KEGG" id="ath:AT5G56960"/>
<dbReference type="Araport" id="AT5G56960"/>
<dbReference type="TAIR" id="AT5G56960"/>
<dbReference type="eggNOG" id="ENOG502QUVA">
    <property type="taxonomic scope" value="Eukaryota"/>
</dbReference>
<dbReference type="HOGENOM" id="CLU_024717_1_1_1"/>
<dbReference type="InParanoid" id="Q9LTS4"/>
<dbReference type="PhylomeDB" id="Q9LTS4"/>
<dbReference type="PRO" id="PR:Q9LTS4"/>
<dbReference type="Proteomes" id="UP000006548">
    <property type="component" value="Chromosome 5"/>
</dbReference>
<dbReference type="ExpressionAtlas" id="Q9LTS4">
    <property type="expression patterns" value="baseline and differential"/>
</dbReference>
<dbReference type="GO" id="GO:0005634">
    <property type="term" value="C:nucleus"/>
    <property type="evidence" value="ECO:0007669"/>
    <property type="project" value="UniProtKB-SubCell"/>
</dbReference>
<dbReference type="GO" id="GO:0003677">
    <property type="term" value="F:DNA binding"/>
    <property type="evidence" value="ECO:0007669"/>
    <property type="project" value="UniProtKB-KW"/>
</dbReference>
<dbReference type="GO" id="GO:0003700">
    <property type="term" value="F:DNA-binding transcription factor activity"/>
    <property type="evidence" value="ECO:0000250"/>
    <property type="project" value="TAIR"/>
</dbReference>
<dbReference type="GO" id="GO:0046983">
    <property type="term" value="F:protein dimerization activity"/>
    <property type="evidence" value="ECO:0007669"/>
    <property type="project" value="InterPro"/>
</dbReference>
<dbReference type="GO" id="GO:0006355">
    <property type="term" value="P:regulation of DNA-templated transcription"/>
    <property type="evidence" value="ECO:0000304"/>
    <property type="project" value="TAIR"/>
</dbReference>
<dbReference type="CDD" id="cd11393">
    <property type="entry name" value="bHLH_AtbHLH_like"/>
    <property type="match status" value="1"/>
</dbReference>
<dbReference type="Gene3D" id="4.10.280.10">
    <property type="entry name" value="Helix-loop-helix DNA-binding domain"/>
    <property type="match status" value="1"/>
</dbReference>
<dbReference type="InterPro" id="IPR044658">
    <property type="entry name" value="bHLH92/bHLH041-like"/>
</dbReference>
<dbReference type="InterPro" id="IPR045239">
    <property type="entry name" value="bHLH95_bHLH"/>
</dbReference>
<dbReference type="InterPro" id="IPR011598">
    <property type="entry name" value="bHLH_dom"/>
</dbReference>
<dbReference type="InterPro" id="IPR055477">
    <property type="entry name" value="DUF7049"/>
</dbReference>
<dbReference type="InterPro" id="IPR055478">
    <property type="entry name" value="DUF7050"/>
</dbReference>
<dbReference type="InterPro" id="IPR036638">
    <property type="entry name" value="HLH_DNA-bd_sf"/>
</dbReference>
<dbReference type="PANTHER" id="PTHR46665:SF1">
    <property type="entry name" value="SPERMATOGENESIS- AND OOGENESIS-SPECIFIC BASIC HELIX-LOOP-HELIX-CONTAINING PROTEIN 1"/>
    <property type="match status" value="1"/>
</dbReference>
<dbReference type="PANTHER" id="PTHR46665">
    <property type="entry name" value="TRANSCRIPTION FACTOR BHLH041-RELATED-RELATED"/>
    <property type="match status" value="1"/>
</dbReference>
<dbReference type="Pfam" id="PF23132">
    <property type="entry name" value="DUF7049"/>
    <property type="match status" value="1"/>
</dbReference>
<dbReference type="Pfam" id="PF23133">
    <property type="entry name" value="DUF7050"/>
    <property type="match status" value="1"/>
</dbReference>
<dbReference type="Pfam" id="PF00010">
    <property type="entry name" value="HLH"/>
    <property type="match status" value="1"/>
</dbReference>
<dbReference type="SMART" id="SM00353">
    <property type="entry name" value="HLH"/>
    <property type="match status" value="1"/>
</dbReference>
<dbReference type="SUPFAM" id="SSF47459">
    <property type="entry name" value="HLH, helix-loop-helix DNA-binding domain"/>
    <property type="match status" value="1"/>
</dbReference>
<dbReference type="PROSITE" id="PS50888">
    <property type="entry name" value="BHLH"/>
    <property type="match status" value="1"/>
</dbReference>
<proteinExistence type="inferred from homology"/>
<comment type="subunit">
    <text evidence="3">Homodimer.</text>
</comment>
<comment type="subcellular location">
    <subcellularLocation>
        <location evidence="1">Nucleus</location>
    </subcellularLocation>
</comment>
<keyword id="KW-0238">DNA-binding</keyword>
<keyword id="KW-0539">Nucleus</keyword>
<keyword id="KW-1185">Reference proteome</keyword>
<keyword id="KW-0804">Transcription</keyword>
<keyword id="KW-0805">Transcription regulation</keyword>
<protein>
    <recommendedName>
        <fullName>Putative transcription factor bHLH041</fullName>
    </recommendedName>
    <alternativeName>
        <fullName>Basic helix-loop-helix protein 41</fullName>
        <shortName>AtbHLH41</shortName>
        <shortName>bHLH 41</shortName>
    </alternativeName>
    <alternativeName>
        <fullName>Transcription factor EN 51</fullName>
    </alternativeName>
    <alternativeName>
        <fullName>bHLH transcription factor bHLH041</fullName>
    </alternativeName>
</protein>
<accession>Q9LTS4</accession>
<organism>
    <name type="scientific">Arabidopsis thaliana</name>
    <name type="common">Mouse-ear cress</name>
    <dbReference type="NCBI Taxonomy" id="3702"/>
    <lineage>
        <taxon>Eukaryota</taxon>
        <taxon>Viridiplantae</taxon>
        <taxon>Streptophyta</taxon>
        <taxon>Embryophyta</taxon>
        <taxon>Tracheophyta</taxon>
        <taxon>Spermatophyta</taxon>
        <taxon>Magnoliopsida</taxon>
        <taxon>eudicotyledons</taxon>
        <taxon>Gunneridae</taxon>
        <taxon>Pentapetalae</taxon>
        <taxon>rosids</taxon>
        <taxon>malvids</taxon>
        <taxon>Brassicales</taxon>
        <taxon>Brassicaceae</taxon>
        <taxon>Camelineae</taxon>
        <taxon>Arabidopsis</taxon>
    </lineage>
</organism>
<evidence type="ECO:0000255" key="1">
    <source>
        <dbReference type="PROSITE-ProRule" id="PRU00981"/>
    </source>
</evidence>
<evidence type="ECO:0000256" key="2">
    <source>
        <dbReference type="SAM" id="MobiDB-lite"/>
    </source>
</evidence>
<evidence type="ECO:0000305" key="3"/>
<name>BH041_ARATH</name>
<sequence>MMHLILSCSYLISMDGYYNEASEEPSSSSSSGSLARSLFHEYRQSVIPLQNGHVPSMAFMNNLPYVEIRPQESQRLAFNDTQRLFYQMKIEASLREWFPEDFNRKSSPANSDYLRPPHYPSSSSSSLSPNNISEYSSLLFPLIPKPSTTTEAVNVPVLPPLAPINMIHPQHQEPLFRNRQREEEAMTQAILAVLTGPSSPPSTSSSPQRKGRATAFKRYYSMISDRGRAPLPSVRKQSMMTRAMSFYNRLNINQRERFTRENATTHGEGSGGSGGGGRYTSGPSATQLQHMISERKRREKLNESFQALRSLLPPGTKKDKASVLSIAREQLSSLQGEISKLLERNREVEAKLAGEREIENDLRPEERFNVRIRHIPESTSRERTLDLRVVLRGDIIRVDDLMIRLLEFLKQINNVSLVSIEARTLARAEGDTSIVLVISLRLKIEGEWDESAFQEAVRRVVADLAH</sequence>
<reference key="1">
    <citation type="journal article" date="2000" name="DNA Res.">
        <title>Structural analysis of Arabidopsis thaliana chromosome 5. X. Sequence features of the regions of 3,076,755 bp covered by sixty P1 and TAC clones.</title>
        <authorList>
            <person name="Sato S."/>
            <person name="Nakamura Y."/>
            <person name="Kaneko T."/>
            <person name="Katoh T."/>
            <person name="Asamizu E."/>
            <person name="Kotani H."/>
            <person name="Tabata S."/>
        </authorList>
    </citation>
    <scope>NUCLEOTIDE SEQUENCE [LARGE SCALE GENOMIC DNA]</scope>
    <source>
        <strain>cv. Columbia</strain>
    </source>
</reference>
<reference key="2">
    <citation type="journal article" date="2017" name="Plant J.">
        <title>Araport11: a complete reannotation of the Arabidopsis thaliana reference genome.</title>
        <authorList>
            <person name="Cheng C.Y."/>
            <person name="Krishnakumar V."/>
            <person name="Chan A.P."/>
            <person name="Thibaud-Nissen F."/>
            <person name="Schobel S."/>
            <person name="Town C.D."/>
        </authorList>
    </citation>
    <scope>GENOME REANNOTATION</scope>
    <source>
        <strain>cv. Columbia</strain>
    </source>
</reference>
<reference key="3">
    <citation type="journal article" date="2003" name="Mol. Biol. Evol.">
        <title>The basic helix-loop-helix transcription factor family in plants: a genome-wide study of protein structure and functional diversity.</title>
        <authorList>
            <person name="Heim M.A."/>
            <person name="Jakoby M."/>
            <person name="Werber M."/>
            <person name="Martin C."/>
            <person name="Weisshaar B."/>
            <person name="Bailey P.C."/>
        </authorList>
    </citation>
    <scope>GENE FAMILY</scope>
    <scope>NOMENCLATURE</scope>
</reference>
<reference key="4">
    <citation type="journal article" date="2003" name="Plant Cell">
        <title>The Arabidopsis basic/helix-loop-helix transcription factor family.</title>
        <authorList>
            <person name="Toledo-Ortiz G."/>
            <person name="Huq E."/>
            <person name="Quail P.H."/>
        </authorList>
    </citation>
    <scope>GENE FAMILY</scope>
</reference>
<reference key="5">
    <citation type="journal article" date="2003" name="Plant Cell">
        <title>Update on the basic helix-loop-helix transcription factor gene family in Arabidopsis thaliana.</title>
        <authorList>
            <person name="Bailey P.C."/>
            <person name="Martin C."/>
            <person name="Toledo-Ortiz G."/>
            <person name="Quail P.H."/>
            <person name="Huq E."/>
            <person name="Heim M.A."/>
            <person name="Jakoby M."/>
            <person name="Werber M."/>
            <person name="Weisshaar B."/>
        </authorList>
    </citation>
    <scope>GENE FAMILY</scope>
    <scope>NOMENCLATURE</scope>
</reference>
<feature type="chain" id="PRO_0000358744" description="Putative transcription factor bHLH041">
    <location>
        <begin position="1"/>
        <end position="466"/>
    </location>
</feature>
<feature type="domain" description="bHLH" evidence="1">
    <location>
        <begin position="285"/>
        <end position="334"/>
    </location>
</feature>
<feature type="region of interest" description="Disordered" evidence="2">
    <location>
        <begin position="108"/>
        <end position="129"/>
    </location>
</feature>
<feature type="region of interest" description="Disordered" evidence="2">
    <location>
        <begin position="194"/>
        <end position="213"/>
    </location>
</feature>
<feature type="region of interest" description="Disordered" evidence="2">
    <location>
        <begin position="260"/>
        <end position="289"/>
    </location>
</feature>
<feature type="compositionally biased region" description="Low complexity" evidence="2">
    <location>
        <begin position="120"/>
        <end position="129"/>
    </location>
</feature>
<feature type="compositionally biased region" description="Gly residues" evidence="2">
    <location>
        <begin position="268"/>
        <end position="279"/>
    </location>
</feature>
<gene>
    <name type="primary">BHLH41</name>
    <name type="synonym">EN51</name>
    <name type="ordered locus">At5g56960</name>
    <name type="ORF">MHM17.7</name>
</gene>